<evidence type="ECO:0000255" key="1">
    <source>
        <dbReference type="HAMAP-Rule" id="MF_00151"/>
    </source>
</evidence>
<organism>
    <name type="scientific">Thermotoga neapolitana (strain ATCC 49049 / DSM 4359 / NBRC 107923 / NS-E)</name>
    <dbReference type="NCBI Taxonomy" id="309803"/>
    <lineage>
        <taxon>Bacteria</taxon>
        <taxon>Thermotogati</taxon>
        <taxon>Thermotogota</taxon>
        <taxon>Thermotogae</taxon>
        <taxon>Thermotogales</taxon>
        <taxon>Thermotogaceae</taxon>
        <taxon>Thermotoga</taxon>
    </lineage>
</organism>
<protein>
    <recommendedName>
        <fullName evidence="1">Phosphopantetheine adenylyltransferase</fullName>
        <ecNumber evidence="1">2.7.7.3</ecNumber>
    </recommendedName>
    <alternativeName>
        <fullName evidence="1">Dephospho-CoA pyrophosphorylase</fullName>
    </alternativeName>
    <alternativeName>
        <fullName evidence="1">Pantetheine-phosphate adenylyltransferase</fullName>
        <shortName evidence="1">PPAT</shortName>
    </alternativeName>
</protein>
<gene>
    <name evidence="1" type="primary">coaD</name>
    <name type="ordered locus">CTN_1843</name>
</gene>
<accession>B9KAN6</accession>
<name>COAD_THENN</name>
<proteinExistence type="inferred from homology"/>
<sequence length="161" mass="18390">MVAVYPGSFDPITLGHVDIIKRALSIFDELVVLITENPRKRCLFSLEERRKLVESALKNVDRVRIDVHRGLLVNYLKEHGIKVLVRGLRAVTDYEYELQMALANKKLYGELETVFLTASEEFSFVSSSLVKEVAMYGGDVTEWVTPEVARALYEKLKEGKR</sequence>
<feature type="chain" id="PRO_1000123308" description="Phosphopantetheine adenylyltransferase">
    <location>
        <begin position="1"/>
        <end position="161"/>
    </location>
</feature>
<feature type="binding site" evidence="1">
    <location>
        <begin position="8"/>
        <end position="9"/>
    </location>
    <ligand>
        <name>ATP</name>
        <dbReference type="ChEBI" id="CHEBI:30616"/>
    </ligand>
</feature>
<feature type="binding site" evidence="1">
    <location>
        <position position="8"/>
    </location>
    <ligand>
        <name>substrate</name>
    </ligand>
</feature>
<feature type="binding site" evidence="1">
    <location>
        <position position="16"/>
    </location>
    <ligand>
        <name>ATP</name>
        <dbReference type="ChEBI" id="CHEBI:30616"/>
    </ligand>
</feature>
<feature type="binding site" evidence="1">
    <location>
        <position position="40"/>
    </location>
    <ligand>
        <name>substrate</name>
    </ligand>
</feature>
<feature type="binding site" evidence="1">
    <location>
        <position position="72"/>
    </location>
    <ligand>
        <name>substrate</name>
    </ligand>
</feature>
<feature type="binding site" evidence="1">
    <location>
        <position position="86"/>
    </location>
    <ligand>
        <name>substrate</name>
    </ligand>
</feature>
<feature type="binding site" evidence="1">
    <location>
        <begin position="87"/>
        <end position="89"/>
    </location>
    <ligand>
        <name>ATP</name>
        <dbReference type="ChEBI" id="CHEBI:30616"/>
    </ligand>
</feature>
<feature type="binding site" evidence="1">
    <location>
        <position position="97"/>
    </location>
    <ligand>
        <name>ATP</name>
        <dbReference type="ChEBI" id="CHEBI:30616"/>
    </ligand>
</feature>
<feature type="binding site" evidence="1">
    <location>
        <begin position="122"/>
        <end position="128"/>
    </location>
    <ligand>
        <name>ATP</name>
        <dbReference type="ChEBI" id="CHEBI:30616"/>
    </ligand>
</feature>
<feature type="site" description="Transition state stabilizer" evidence="1">
    <location>
        <position position="16"/>
    </location>
</feature>
<reference key="1">
    <citation type="submission" date="2007-11" db="EMBL/GenBank/DDBJ databases">
        <title>The genome sequence of the hyperthermophilic bacterium Thermotoga neapolitana.</title>
        <authorList>
            <person name="Lim S.K."/>
            <person name="Kim J.S."/>
            <person name="Cha S.H."/>
            <person name="Park B.C."/>
            <person name="Lee D.S."/>
            <person name="Tae H.S."/>
            <person name="Kim S.-J."/>
            <person name="Kim J.J."/>
            <person name="Park K.J."/>
            <person name="Lee S.Y."/>
        </authorList>
    </citation>
    <scope>NUCLEOTIDE SEQUENCE [LARGE SCALE GENOMIC DNA]</scope>
    <source>
        <strain>ATCC 49049 / DSM 4359 / NBRC 107923 / NS-E</strain>
    </source>
</reference>
<keyword id="KW-0067">ATP-binding</keyword>
<keyword id="KW-0173">Coenzyme A biosynthesis</keyword>
<keyword id="KW-0963">Cytoplasm</keyword>
<keyword id="KW-0460">Magnesium</keyword>
<keyword id="KW-0547">Nucleotide-binding</keyword>
<keyword id="KW-0548">Nucleotidyltransferase</keyword>
<keyword id="KW-0808">Transferase</keyword>
<comment type="function">
    <text evidence="1">Reversibly transfers an adenylyl group from ATP to 4'-phosphopantetheine, yielding dephospho-CoA (dPCoA) and pyrophosphate.</text>
</comment>
<comment type="catalytic activity">
    <reaction evidence="1">
        <text>(R)-4'-phosphopantetheine + ATP + H(+) = 3'-dephospho-CoA + diphosphate</text>
        <dbReference type="Rhea" id="RHEA:19801"/>
        <dbReference type="ChEBI" id="CHEBI:15378"/>
        <dbReference type="ChEBI" id="CHEBI:30616"/>
        <dbReference type="ChEBI" id="CHEBI:33019"/>
        <dbReference type="ChEBI" id="CHEBI:57328"/>
        <dbReference type="ChEBI" id="CHEBI:61723"/>
        <dbReference type="EC" id="2.7.7.3"/>
    </reaction>
</comment>
<comment type="cofactor">
    <cofactor evidence="1">
        <name>Mg(2+)</name>
        <dbReference type="ChEBI" id="CHEBI:18420"/>
    </cofactor>
</comment>
<comment type="pathway">
    <text evidence="1">Cofactor biosynthesis; coenzyme A biosynthesis; CoA from (R)-pantothenate: step 4/5.</text>
</comment>
<comment type="subunit">
    <text evidence="1">Homohexamer.</text>
</comment>
<comment type="subcellular location">
    <subcellularLocation>
        <location evidence="1">Cytoplasm</location>
    </subcellularLocation>
</comment>
<comment type="similarity">
    <text evidence="1">Belongs to the bacterial CoaD family.</text>
</comment>
<dbReference type="EC" id="2.7.7.3" evidence="1"/>
<dbReference type="EMBL" id="CP000916">
    <property type="protein sequence ID" value="ACM24019.1"/>
    <property type="molecule type" value="Genomic_DNA"/>
</dbReference>
<dbReference type="RefSeq" id="WP_015920255.1">
    <property type="nucleotide sequence ID" value="NC_011978.1"/>
</dbReference>
<dbReference type="SMR" id="B9KAN6"/>
<dbReference type="STRING" id="309803.CTN_1843"/>
<dbReference type="KEGG" id="tna:CTN_1843"/>
<dbReference type="eggNOG" id="COG0669">
    <property type="taxonomic scope" value="Bacteria"/>
</dbReference>
<dbReference type="HOGENOM" id="CLU_100149_0_1_0"/>
<dbReference type="UniPathway" id="UPA00241">
    <property type="reaction ID" value="UER00355"/>
</dbReference>
<dbReference type="Proteomes" id="UP000000445">
    <property type="component" value="Chromosome"/>
</dbReference>
<dbReference type="GO" id="GO:0005737">
    <property type="term" value="C:cytoplasm"/>
    <property type="evidence" value="ECO:0007669"/>
    <property type="project" value="UniProtKB-SubCell"/>
</dbReference>
<dbReference type="GO" id="GO:0005524">
    <property type="term" value="F:ATP binding"/>
    <property type="evidence" value="ECO:0007669"/>
    <property type="project" value="UniProtKB-KW"/>
</dbReference>
<dbReference type="GO" id="GO:0004595">
    <property type="term" value="F:pantetheine-phosphate adenylyltransferase activity"/>
    <property type="evidence" value="ECO:0007669"/>
    <property type="project" value="UniProtKB-UniRule"/>
</dbReference>
<dbReference type="GO" id="GO:0015937">
    <property type="term" value="P:coenzyme A biosynthetic process"/>
    <property type="evidence" value="ECO:0007669"/>
    <property type="project" value="UniProtKB-UniRule"/>
</dbReference>
<dbReference type="CDD" id="cd02163">
    <property type="entry name" value="PPAT"/>
    <property type="match status" value="1"/>
</dbReference>
<dbReference type="Gene3D" id="3.40.50.620">
    <property type="entry name" value="HUPs"/>
    <property type="match status" value="1"/>
</dbReference>
<dbReference type="HAMAP" id="MF_00151">
    <property type="entry name" value="PPAT_bact"/>
    <property type="match status" value="1"/>
</dbReference>
<dbReference type="InterPro" id="IPR004821">
    <property type="entry name" value="Cyt_trans-like"/>
</dbReference>
<dbReference type="InterPro" id="IPR001980">
    <property type="entry name" value="PPAT"/>
</dbReference>
<dbReference type="InterPro" id="IPR014729">
    <property type="entry name" value="Rossmann-like_a/b/a_fold"/>
</dbReference>
<dbReference type="NCBIfam" id="TIGR01510">
    <property type="entry name" value="coaD_prev_kdtB"/>
    <property type="match status" value="1"/>
</dbReference>
<dbReference type="NCBIfam" id="TIGR00125">
    <property type="entry name" value="cyt_tran_rel"/>
    <property type="match status" value="1"/>
</dbReference>
<dbReference type="PANTHER" id="PTHR21342">
    <property type="entry name" value="PHOSPHOPANTETHEINE ADENYLYLTRANSFERASE"/>
    <property type="match status" value="1"/>
</dbReference>
<dbReference type="PANTHER" id="PTHR21342:SF1">
    <property type="entry name" value="PHOSPHOPANTETHEINE ADENYLYLTRANSFERASE"/>
    <property type="match status" value="1"/>
</dbReference>
<dbReference type="Pfam" id="PF01467">
    <property type="entry name" value="CTP_transf_like"/>
    <property type="match status" value="1"/>
</dbReference>
<dbReference type="PRINTS" id="PR01020">
    <property type="entry name" value="LPSBIOSNTHSS"/>
</dbReference>
<dbReference type="SUPFAM" id="SSF52374">
    <property type="entry name" value="Nucleotidylyl transferase"/>
    <property type="match status" value="1"/>
</dbReference>